<feature type="chain" id="PRO_0000321875" description="Penicillin-binding protein 1A">
    <location>
        <begin position="1"/>
        <end position="863"/>
    </location>
</feature>
<feature type="topological domain" description="Cytoplasmic" evidence="4">
    <location>
        <begin position="1"/>
        <end position="28"/>
    </location>
</feature>
<feature type="transmembrane region" description="Helical; Signal-anchor for type II membrane protein" evidence="4">
    <location>
        <begin position="29"/>
        <end position="49"/>
    </location>
</feature>
<feature type="topological domain" description="Extracellular" evidence="4">
    <location>
        <begin position="50"/>
        <end position="863"/>
    </location>
</feature>
<feature type="region of interest" description="Transglycosylase" evidence="1">
    <location>
        <begin position="71"/>
        <end position="248"/>
    </location>
</feature>
<feature type="region of interest" description="Transpeptidase" evidence="1">
    <location>
        <begin position="392"/>
        <end position="674"/>
    </location>
</feature>
<feature type="region of interest" description="Disordered" evidence="5">
    <location>
        <begin position="774"/>
        <end position="863"/>
    </location>
</feature>
<feature type="compositionally biased region" description="Polar residues" evidence="5">
    <location>
        <begin position="808"/>
        <end position="836"/>
    </location>
</feature>
<feature type="compositionally biased region" description="Basic and acidic residues" evidence="5">
    <location>
        <begin position="837"/>
        <end position="846"/>
    </location>
</feature>
<feature type="compositionally biased region" description="Basic residues" evidence="5">
    <location>
        <begin position="847"/>
        <end position="863"/>
    </location>
</feature>
<feature type="active site" description="Proton donor; for transglycosylase activity" evidence="3">
    <location>
        <position position="110"/>
    </location>
</feature>
<feature type="active site" description="Acyl-ester intermediate; for transpeptidase activity" evidence="3">
    <location>
        <position position="431"/>
    </location>
</feature>
<reference key="1">
    <citation type="journal article" date="2006" name="Nat. Biotechnol.">
        <title>The genome and transcriptomes of the anti-tumor agent Clostridium novyi-NT.</title>
        <authorList>
            <person name="Bettegowda C."/>
            <person name="Huang X."/>
            <person name="Lin J."/>
            <person name="Cheong I."/>
            <person name="Kohli M."/>
            <person name="Szabo S.A."/>
            <person name="Zhang X."/>
            <person name="Diaz L.A. Jr."/>
            <person name="Velculescu V.E."/>
            <person name="Parmigiani G."/>
            <person name="Kinzler K.W."/>
            <person name="Vogelstein B."/>
            <person name="Zhou S."/>
        </authorList>
    </citation>
    <scope>NUCLEOTIDE SEQUENCE [LARGE SCALE GENOMIC DNA]</scope>
    <source>
        <strain>NT</strain>
    </source>
</reference>
<protein>
    <recommendedName>
        <fullName>Penicillin-binding protein 1A</fullName>
        <shortName>PBP1a</shortName>
    </recommendedName>
    <domain>
        <recommendedName>
            <fullName>Penicillin-insensitive transglycosylase</fullName>
            <ecNumber evidence="2">2.4.99.28</ecNumber>
        </recommendedName>
        <alternativeName>
            <fullName>Peptidoglycan TGase</fullName>
        </alternativeName>
    </domain>
    <domain>
        <recommendedName>
            <fullName>Penicillin-sensitive transpeptidase</fullName>
            <ecNumber evidence="2">3.4.16.4</ecNumber>
        </recommendedName>
        <alternativeName>
            <fullName>DD-transpeptidase</fullName>
        </alternativeName>
    </domain>
</protein>
<accession>A0PZT1</accession>
<organism>
    <name type="scientific">Clostridium novyi (strain NT)</name>
    <dbReference type="NCBI Taxonomy" id="386415"/>
    <lineage>
        <taxon>Bacteria</taxon>
        <taxon>Bacillati</taxon>
        <taxon>Bacillota</taxon>
        <taxon>Clostridia</taxon>
        <taxon>Eubacteriales</taxon>
        <taxon>Clostridiaceae</taxon>
        <taxon>Clostridium</taxon>
    </lineage>
</organism>
<name>PBPA_CLONN</name>
<proteinExistence type="inferred from homology"/>
<dbReference type="EC" id="2.4.99.28" evidence="2"/>
<dbReference type="EC" id="3.4.16.4" evidence="2"/>
<dbReference type="EMBL" id="CP000382">
    <property type="protein sequence ID" value="ABK60403.1"/>
    <property type="molecule type" value="Genomic_DNA"/>
</dbReference>
<dbReference type="RefSeq" id="WP_011721888.1">
    <property type="nucleotide sequence ID" value="NC_008593.1"/>
</dbReference>
<dbReference type="SMR" id="A0PZT1"/>
<dbReference type="STRING" id="386415.NT01CX_1810"/>
<dbReference type="CAZy" id="GT51">
    <property type="family name" value="Glycosyltransferase Family 51"/>
</dbReference>
<dbReference type="KEGG" id="cno:NT01CX_1810"/>
<dbReference type="PATRIC" id="fig|386415.7.peg.913"/>
<dbReference type="eggNOG" id="COG0744">
    <property type="taxonomic scope" value="Bacteria"/>
</dbReference>
<dbReference type="HOGENOM" id="CLU_006354_2_2_9"/>
<dbReference type="UniPathway" id="UPA00219"/>
<dbReference type="Proteomes" id="UP000008220">
    <property type="component" value="Chromosome"/>
</dbReference>
<dbReference type="GO" id="GO:0030288">
    <property type="term" value="C:outer membrane-bounded periplasmic space"/>
    <property type="evidence" value="ECO:0007669"/>
    <property type="project" value="TreeGrafter"/>
</dbReference>
<dbReference type="GO" id="GO:0005886">
    <property type="term" value="C:plasma membrane"/>
    <property type="evidence" value="ECO:0007669"/>
    <property type="project" value="UniProtKB-SubCell"/>
</dbReference>
<dbReference type="GO" id="GO:0008658">
    <property type="term" value="F:penicillin binding"/>
    <property type="evidence" value="ECO:0007669"/>
    <property type="project" value="InterPro"/>
</dbReference>
<dbReference type="GO" id="GO:0008955">
    <property type="term" value="F:peptidoglycan glycosyltransferase activity"/>
    <property type="evidence" value="ECO:0007669"/>
    <property type="project" value="RHEA"/>
</dbReference>
<dbReference type="GO" id="GO:0009002">
    <property type="term" value="F:serine-type D-Ala-D-Ala carboxypeptidase activity"/>
    <property type="evidence" value="ECO:0007669"/>
    <property type="project" value="UniProtKB-EC"/>
</dbReference>
<dbReference type="GO" id="GO:0071555">
    <property type="term" value="P:cell wall organization"/>
    <property type="evidence" value="ECO:0007669"/>
    <property type="project" value="UniProtKB-KW"/>
</dbReference>
<dbReference type="GO" id="GO:0009252">
    <property type="term" value="P:peptidoglycan biosynthetic process"/>
    <property type="evidence" value="ECO:0007669"/>
    <property type="project" value="UniProtKB-UniPathway"/>
</dbReference>
<dbReference type="GO" id="GO:0006508">
    <property type="term" value="P:proteolysis"/>
    <property type="evidence" value="ECO:0007669"/>
    <property type="project" value="UniProtKB-KW"/>
</dbReference>
<dbReference type="GO" id="GO:0008360">
    <property type="term" value="P:regulation of cell shape"/>
    <property type="evidence" value="ECO:0007669"/>
    <property type="project" value="UniProtKB-KW"/>
</dbReference>
<dbReference type="GO" id="GO:0046677">
    <property type="term" value="P:response to antibiotic"/>
    <property type="evidence" value="ECO:0007669"/>
    <property type="project" value="UniProtKB-KW"/>
</dbReference>
<dbReference type="FunFam" id="1.10.3810.10:FF:000001">
    <property type="entry name" value="Penicillin-binding protein 1A"/>
    <property type="match status" value="1"/>
</dbReference>
<dbReference type="Gene3D" id="1.10.3810.10">
    <property type="entry name" value="Biosynthetic peptidoglycan transglycosylase-like"/>
    <property type="match status" value="1"/>
</dbReference>
<dbReference type="Gene3D" id="3.40.710.10">
    <property type="entry name" value="DD-peptidase/beta-lactamase superfamily"/>
    <property type="match status" value="1"/>
</dbReference>
<dbReference type="InterPro" id="IPR012338">
    <property type="entry name" value="Beta-lactam/transpept-like"/>
</dbReference>
<dbReference type="InterPro" id="IPR001264">
    <property type="entry name" value="Glyco_trans_51"/>
</dbReference>
<dbReference type="InterPro" id="IPR050396">
    <property type="entry name" value="Glycosyltr_51/Transpeptidase"/>
</dbReference>
<dbReference type="InterPro" id="IPR023346">
    <property type="entry name" value="Lysozyme-like_dom_sf"/>
</dbReference>
<dbReference type="InterPro" id="IPR036950">
    <property type="entry name" value="PBP_transglycosylase"/>
</dbReference>
<dbReference type="InterPro" id="IPR001460">
    <property type="entry name" value="PCN-bd_Tpept"/>
</dbReference>
<dbReference type="PANTHER" id="PTHR32282">
    <property type="entry name" value="BINDING PROTEIN TRANSPEPTIDASE, PUTATIVE-RELATED"/>
    <property type="match status" value="1"/>
</dbReference>
<dbReference type="PANTHER" id="PTHR32282:SF11">
    <property type="entry name" value="PENICILLIN-BINDING PROTEIN 1B"/>
    <property type="match status" value="1"/>
</dbReference>
<dbReference type="Pfam" id="PF00912">
    <property type="entry name" value="Transgly"/>
    <property type="match status" value="1"/>
</dbReference>
<dbReference type="Pfam" id="PF00905">
    <property type="entry name" value="Transpeptidase"/>
    <property type="match status" value="1"/>
</dbReference>
<dbReference type="SUPFAM" id="SSF56601">
    <property type="entry name" value="beta-lactamase/transpeptidase-like"/>
    <property type="match status" value="1"/>
</dbReference>
<dbReference type="SUPFAM" id="SSF53955">
    <property type="entry name" value="Lysozyme-like"/>
    <property type="match status" value="1"/>
</dbReference>
<keyword id="KW-0046">Antibiotic resistance</keyword>
<keyword id="KW-0121">Carboxypeptidase</keyword>
<keyword id="KW-1003">Cell membrane</keyword>
<keyword id="KW-0133">Cell shape</keyword>
<keyword id="KW-0961">Cell wall biogenesis/degradation</keyword>
<keyword id="KW-0328">Glycosyltransferase</keyword>
<keyword id="KW-0378">Hydrolase</keyword>
<keyword id="KW-0472">Membrane</keyword>
<keyword id="KW-0511">Multifunctional enzyme</keyword>
<keyword id="KW-0573">Peptidoglycan synthesis</keyword>
<keyword id="KW-0645">Protease</keyword>
<keyword id="KW-1185">Reference proteome</keyword>
<keyword id="KW-0735">Signal-anchor</keyword>
<keyword id="KW-0808">Transferase</keyword>
<keyword id="KW-0812">Transmembrane</keyword>
<keyword id="KW-1133">Transmembrane helix</keyword>
<gene>
    <name type="primary">pbpA</name>
    <name type="ordered locus">NT01CX_1810</name>
</gene>
<evidence type="ECO:0000250" key="1"/>
<evidence type="ECO:0000250" key="2">
    <source>
        <dbReference type="UniProtKB" id="P02918"/>
    </source>
</evidence>
<evidence type="ECO:0000250" key="3">
    <source>
        <dbReference type="UniProtKB" id="P02919"/>
    </source>
</evidence>
<evidence type="ECO:0000255" key="4"/>
<evidence type="ECO:0000256" key="5">
    <source>
        <dbReference type="SAM" id="MobiDB-lite"/>
    </source>
</evidence>
<evidence type="ECO:0000305" key="6"/>
<sequence length="863" mass="95824">MTENRDNKTSQSEKTTQKKKKKKFKAFKIILITFITLIVISLVTAIGITLAIIKTSPDININEIIAASDASKIYDDKGELVDSIITSKKKILVKYDEVPENLINAFVSIEDERFFKHSGIDVKRIAGAFLIDMKNIVSGKPALQGASTITQQLIKNTVFETHGNSLNDKLRRKVQEWYLAPKLEKEVGKKSIMEAYLNTIYLGGRAIGVGAAADQYFNVSIDKLDLVQCAFIAGLPQSPSVYYPYSRTSKKDPSKYINRTKTVLAKMKENGYISQNEYISALAELDTSKSTVTNDESIQTLGQYTIHKPTNIDEKYNFEWFTRPAIERVKKDLKDIYNYSDDEIEKLLVNGNLKIYTTMNKDLQVSTQEIIDNDEKLNSLSSSKNNLVEPQASAVLTDYHTGEVKVIIGGRGTQPALAYNRATNAKVAAGSSIKPLTVYSAAIDSKLATAATVLEDSPLPEAMSKKYSAPGTNWQPKNANGVYSGYLGLRDALKNSVNVYAVKLEDKIGLNTGVKYGEKFGLTFDNVDKNSMAAIALGELNRGTNTFTMANAYGVFGNNGMYSNPRLYTKVLDRNGNVLLETKTQATQVISPEAAYIMYDLLKGPVKEGTATRIQHTYHSDIPIAGKTGSSTKFKNLWFCGLTPYYSGAVWIENKYGQSIYSSDAAALFGKIMNRAVENLPEKEIEMPEGIIKAEVDRVSGLLPTDLSYKDPRGSQVYTELFIKGTVPTEQDNIHVSTKVNKYNGRVSGSYTPSFLTESKVFIKRQSDSEVPLDDDMYVLPDKDKKSSNKSKHNHNNDAKHDNTNNSEDATNEASTEPSPNTDTVPEDSTNNLDPTKNTEKKPSDKKNKKHVIKPIIRPKKHF</sequence>
<comment type="function">
    <text evidence="1">Cell wall formation. Synthesis of cross-linked peptidoglycan from the lipid intermediates. The enzyme has a penicillin-insensitive transglycosylase N-terminal domain (formation of linear glycan strands) and a penicillin-sensitive transpeptidase C-terminal domain (cross-linking of the peptide subunits).</text>
</comment>
<comment type="catalytic activity">
    <reaction evidence="2">
        <text>[GlcNAc-(1-&gt;4)-Mur2Ac(oyl-L-Ala-gamma-D-Glu-L-Lys-D-Ala-D-Ala)](n)-di-trans,octa-cis-undecaprenyl diphosphate + beta-D-GlcNAc-(1-&gt;4)-Mur2Ac(oyl-L-Ala-gamma-D-Glu-L-Lys-D-Ala-D-Ala)-di-trans,octa-cis-undecaprenyl diphosphate = [GlcNAc-(1-&gt;4)-Mur2Ac(oyl-L-Ala-gamma-D-Glu-L-Lys-D-Ala-D-Ala)](n+1)-di-trans,octa-cis-undecaprenyl diphosphate + di-trans,octa-cis-undecaprenyl diphosphate + H(+)</text>
        <dbReference type="Rhea" id="RHEA:23708"/>
        <dbReference type="Rhea" id="RHEA-COMP:9602"/>
        <dbReference type="Rhea" id="RHEA-COMP:9603"/>
        <dbReference type="ChEBI" id="CHEBI:15378"/>
        <dbReference type="ChEBI" id="CHEBI:58405"/>
        <dbReference type="ChEBI" id="CHEBI:60033"/>
        <dbReference type="ChEBI" id="CHEBI:78435"/>
        <dbReference type="EC" id="2.4.99.28"/>
    </reaction>
</comment>
<comment type="catalytic activity">
    <reaction evidence="2">
        <text>Preferential cleavage: (Ac)2-L-Lys-D-Ala-|-D-Ala. Also transpeptidation of peptidyl-alanyl moieties that are N-acyl substituents of D-alanine.</text>
        <dbReference type="EC" id="3.4.16.4"/>
    </reaction>
</comment>
<comment type="pathway">
    <text>Cell wall biogenesis; peptidoglycan biosynthesis.</text>
</comment>
<comment type="subcellular location">
    <subcellularLocation>
        <location evidence="6">Cell membrane</location>
        <topology evidence="6">Single-pass type II membrane protein</topology>
    </subcellularLocation>
</comment>
<comment type="similarity">
    <text evidence="6">In the N-terminal section; belongs to the glycosyltransferase 51 family.</text>
</comment>
<comment type="similarity">
    <text evidence="6">In the C-terminal section; belongs to the transpeptidase family.</text>
</comment>